<proteinExistence type="inferred from homology"/>
<sequence length="398" mass="43229">MSLNSLDLPGKPEDTRVVVAMSGGVDSSVVAGILKREGYDVVGVTLQLYDHGAAVHRAGSCCAGQDIEDARRVSESLGIPHYVLDYEARFREAVIDPFANSYVSGETPIPCVSCNQTVKFADLLQTARDLGADALATGHYIRSRANGAHRALYRPVDTDRDQSYFLFATTQEQIDYLRFPLGHLPKAQVREIAEELGLTVAKKQDSQDICFVPQGKYSDIISRLKPEAANPGDIVHIDGRTLGRHDGIVHYTVGQRRGIGVATGEALYVVHLDAANARVIVGPREALETHKVFLRDVNWLGDTPIADLPKSGMEVFAKVRSTRPPRPAVLRHADGQTWVELVDGESGIAPGQACVLYSDDSNAARVFGGGFIGRSEREPQAEEMLRRLMANADKASAA</sequence>
<evidence type="ECO:0000255" key="1">
    <source>
        <dbReference type="HAMAP-Rule" id="MF_00144"/>
    </source>
</evidence>
<comment type="function">
    <text evidence="1">Catalyzes the 2-thiolation of uridine at the wobble position (U34) of tRNA, leading to the formation of s(2)U34.</text>
</comment>
<comment type="catalytic activity">
    <reaction evidence="1">
        <text>S-sulfanyl-L-cysteinyl-[protein] + uridine(34) in tRNA + AH2 + ATP = 2-thiouridine(34) in tRNA + L-cysteinyl-[protein] + A + AMP + diphosphate + H(+)</text>
        <dbReference type="Rhea" id="RHEA:47032"/>
        <dbReference type="Rhea" id="RHEA-COMP:10131"/>
        <dbReference type="Rhea" id="RHEA-COMP:11726"/>
        <dbReference type="Rhea" id="RHEA-COMP:11727"/>
        <dbReference type="Rhea" id="RHEA-COMP:11728"/>
        <dbReference type="ChEBI" id="CHEBI:13193"/>
        <dbReference type="ChEBI" id="CHEBI:15378"/>
        <dbReference type="ChEBI" id="CHEBI:17499"/>
        <dbReference type="ChEBI" id="CHEBI:29950"/>
        <dbReference type="ChEBI" id="CHEBI:30616"/>
        <dbReference type="ChEBI" id="CHEBI:33019"/>
        <dbReference type="ChEBI" id="CHEBI:61963"/>
        <dbReference type="ChEBI" id="CHEBI:65315"/>
        <dbReference type="ChEBI" id="CHEBI:87170"/>
        <dbReference type="ChEBI" id="CHEBI:456215"/>
        <dbReference type="EC" id="2.8.1.13"/>
    </reaction>
</comment>
<comment type="subcellular location">
    <subcellularLocation>
        <location evidence="1">Cytoplasm</location>
    </subcellularLocation>
</comment>
<comment type="similarity">
    <text evidence="1">Belongs to the MnmA/TRMU family.</text>
</comment>
<reference key="1">
    <citation type="submission" date="2009-03" db="EMBL/GenBank/DDBJ databases">
        <title>Brucella melitensis ATCC 23457 whole genome shotgun sequencing project.</title>
        <authorList>
            <person name="Setubal J.C."/>
            <person name="Boyle S."/>
            <person name="Crasta O.R."/>
            <person name="Gillespie J.J."/>
            <person name="Kenyon R.W."/>
            <person name="Lu J."/>
            <person name="Mane S."/>
            <person name="Nagrani S."/>
            <person name="Shallom J.M."/>
            <person name="Shallom S."/>
            <person name="Shukla M."/>
            <person name="Snyder E.E."/>
            <person name="Sobral B.W."/>
            <person name="Wattam A.R."/>
            <person name="Will R."/>
            <person name="Williams K."/>
            <person name="Yoo H."/>
            <person name="Munk C."/>
            <person name="Tapia R."/>
            <person name="Han C."/>
            <person name="Detter J.C."/>
            <person name="Bruce D."/>
            <person name="Brettin T.S."/>
        </authorList>
    </citation>
    <scope>NUCLEOTIDE SEQUENCE [LARGE SCALE GENOMIC DNA]</scope>
    <source>
        <strain>ATCC 23457</strain>
    </source>
</reference>
<feature type="chain" id="PRO_1000198603" description="tRNA-specific 2-thiouridylase MnmA">
    <location>
        <begin position="1"/>
        <end position="398"/>
    </location>
</feature>
<feature type="region of interest" description="Interaction with tRNA" evidence="1">
    <location>
        <begin position="160"/>
        <end position="162"/>
    </location>
</feature>
<feature type="active site" description="Nucleophile" evidence="1">
    <location>
        <position position="114"/>
    </location>
</feature>
<feature type="active site" description="Cysteine persulfide intermediate" evidence="1">
    <location>
        <position position="210"/>
    </location>
</feature>
<feature type="binding site" evidence="1">
    <location>
        <begin position="20"/>
        <end position="27"/>
    </location>
    <ligand>
        <name>ATP</name>
        <dbReference type="ChEBI" id="CHEBI:30616"/>
    </ligand>
</feature>
<feature type="binding site" evidence="1">
    <location>
        <position position="46"/>
    </location>
    <ligand>
        <name>ATP</name>
        <dbReference type="ChEBI" id="CHEBI:30616"/>
    </ligand>
</feature>
<feature type="binding site" evidence="1">
    <location>
        <position position="138"/>
    </location>
    <ligand>
        <name>ATP</name>
        <dbReference type="ChEBI" id="CHEBI:30616"/>
    </ligand>
</feature>
<feature type="site" description="Interaction with tRNA" evidence="1">
    <location>
        <position position="139"/>
    </location>
</feature>
<feature type="site" description="Interaction with tRNA" evidence="1">
    <location>
        <position position="352"/>
    </location>
</feature>
<feature type="disulfide bond" description="Alternate" evidence="1">
    <location>
        <begin position="114"/>
        <end position="210"/>
    </location>
</feature>
<organism>
    <name type="scientific">Brucella melitensis biotype 2 (strain ATCC 23457)</name>
    <dbReference type="NCBI Taxonomy" id="546272"/>
    <lineage>
        <taxon>Bacteria</taxon>
        <taxon>Pseudomonadati</taxon>
        <taxon>Pseudomonadota</taxon>
        <taxon>Alphaproteobacteria</taxon>
        <taxon>Hyphomicrobiales</taxon>
        <taxon>Brucellaceae</taxon>
        <taxon>Brucella/Ochrobactrum group</taxon>
        <taxon>Brucella</taxon>
    </lineage>
</organism>
<dbReference type="EC" id="2.8.1.13" evidence="1"/>
<dbReference type="EMBL" id="CP001488">
    <property type="protein sequence ID" value="ACO01344.1"/>
    <property type="molecule type" value="Genomic_DNA"/>
</dbReference>
<dbReference type="SMR" id="C0REM2"/>
<dbReference type="KEGG" id="bmi:BMEA_A1644"/>
<dbReference type="HOGENOM" id="CLU_035188_0_1_5"/>
<dbReference type="Proteomes" id="UP000001748">
    <property type="component" value="Chromosome I"/>
</dbReference>
<dbReference type="GO" id="GO:0005737">
    <property type="term" value="C:cytoplasm"/>
    <property type="evidence" value="ECO:0007669"/>
    <property type="project" value="UniProtKB-SubCell"/>
</dbReference>
<dbReference type="GO" id="GO:0005524">
    <property type="term" value="F:ATP binding"/>
    <property type="evidence" value="ECO:0007669"/>
    <property type="project" value="UniProtKB-KW"/>
</dbReference>
<dbReference type="GO" id="GO:0000049">
    <property type="term" value="F:tRNA binding"/>
    <property type="evidence" value="ECO:0007669"/>
    <property type="project" value="UniProtKB-KW"/>
</dbReference>
<dbReference type="GO" id="GO:0103016">
    <property type="term" value="F:tRNA-uridine 2-sulfurtransferase activity"/>
    <property type="evidence" value="ECO:0007669"/>
    <property type="project" value="UniProtKB-EC"/>
</dbReference>
<dbReference type="GO" id="GO:0002143">
    <property type="term" value="P:tRNA wobble position uridine thiolation"/>
    <property type="evidence" value="ECO:0007669"/>
    <property type="project" value="TreeGrafter"/>
</dbReference>
<dbReference type="CDD" id="cd01998">
    <property type="entry name" value="MnmA_TRMU-like"/>
    <property type="match status" value="1"/>
</dbReference>
<dbReference type="FunFam" id="2.30.30.280:FF:000001">
    <property type="entry name" value="tRNA-specific 2-thiouridylase MnmA"/>
    <property type="match status" value="1"/>
</dbReference>
<dbReference type="FunFam" id="3.40.50.620:FF:000115">
    <property type="entry name" value="tRNA-specific 2-thiouridylase MnmA"/>
    <property type="match status" value="1"/>
</dbReference>
<dbReference type="Gene3D" id="2.30.30.280">
    <property type="entry name" value="Adenine nucleotide alpha hydrolases-like domains"/>
    <property type="match status" value="1"/>
</dbReference>
<dbReference type="Gene3D" id="3.40.50.620">
    <property type="entry name" value="HUPs"/>
    <property type="match status" value="1"/>
</dbReference>
<dbReference type="Gene3D" id="2.40.30.10">
    <property type="entry name" value="Translation factors"/>
    <property type="match status" value="1"/>
</dbReference>
<dbReference type="HAMAP" id="MF_00144">
    <property type="entry name" value="tRNA_thiouridyl_MnmA"/>
    <property type="match status" value="1"/>
</dbReference>
<dbReference type="InterPro" id="IPR004506">
    <property type="entry name" value="MnmA-like"/>
</dbReference>
<dbReference type="InterPro" id="IPR046885">
    <property type="entry name" value="MnmA-like_C"/>
</dbReference>
<dbReference type="InterPro" id="IPR046884">
    <property type="entry name" value="MnmA-like_central"/>
</dbReference>
<dbReference type="InterPro" id="IPR023382">
    <property type="entry name" value="MnmA-like_central_sf"/>
</dbReference>
<dbReference type="InterPro" id="IPR014729">
    <property type="entry name" value="Rossmann-like_a/b/a_fold"/>
</dbReference>
<dbReference type="NCBIfam" id="NF001138">
    <property type="entry name" value="PRK00143.1"/>
    <property type="match status" value="1"/>
</dbReference>
<dbReference type="NCBIfam" id="TIGR00420">
    <property type="entry name" value="trmU"/>
    <property type="match status" value="1"/>
</dbReference>
<dbReference type="PANTHER" id="PTHR11933:SF5">
    <property type="entry name" value="MITOCHONDRIAL TRNA-SPECIFIC 2-THIOURIDYLASE 1"/>
    <property type="match status" value="1"/>
</dbReference>
<dbReference type="PANTHER" id="PTHR11933">
    <property type="entry name" value="TRNA 5-METHYLAMINOMETHYL-2-THIOURIDYLATE -METHYLTRANSFERASE"/>
    <property type="match status" value="1"/>
</dbReference>
<dbReference type="Pfam" id="PF03054">
    <property type="entry name" value="tRNA_Me_trans"/>
    <property type="match status" value="1"/>
</dbReference>
<dbReference type="Pfam" id="PF20258">
    <property type="entry name" value="tRNA_Me_trans_C"/>
    <property type="match status" value="1"/>
</dbReference>
<dbReference type="Pfam" id="PF20259">
    <property type="entry name" value="tRNA_Me_trans_M"/>
    <property type="match status" value="1"/>
</dbReference>
<dbReference type="SUPFAM" id="SSF52402">
    <property type="entry name" value="Adenine nucleotide alpha hydrolases-like"/>
    <property type="match status" value="1"/>
</dbReference>
<name>MNMA_BRUMB</name>
<protein>
    <recommendedName>
        <fullName evidence="1">tRNA-specific 2-thiouridylase MnmA</fullName>
        <ecNumber evidence="1">2.8.1.13</ecNumber>
    </recommendedName>
</protein>
<accession>C0REM2</accession>
<keyword id="KW-0067">ATP-binding</keyword>
<keyword id="KW-0963">Cytoplasm</keyword>
<keyword id="KW-1015">Disulfide bond</keyword>
<keyword id="KW-0547">Nucleotide-binding</keyword>
<keyword id="KW-0694">RNA-binding</keyword>
<keyword id="KW-0808">Transferase</keyword>
<keyword id="KW-0819">tRNA processing</keyword>
<keyword id="KW-0820">tRNA-binding</keyword>
<gene>
    <name evidence="1" type="primary">mnmA</name>
    <name type="ordered locus">BMEA_A1644</name>
</gene>